<feature type="chain" id="PRO_0000271040" description="Transmembrane protein 169">
    <location>
        <begin position="1"/>
        <end position="297"/>
    </location>
</feature>
<feature type="topological domain" description="Extracellular" evidence="1">
    <location>
        <begin position="1"/>
        <end position="159"/>
    </location>
</feature>
<feature type="transmembrane region" description="Helical" evidence="1">
    <location>
        <begin position="160"/>
        <end position="180"/>
    </location>
</feature>
<feature type="topological domain" description="Cytoplasmic" evidence="1">
    <location>
        <begin position="181"/>
        <end position="210"/>
    </location>
</feature>
<feature type="transmembrane region" description="Helical" evidence="1">
    <location>
        <begin position="211"/>
        <end position="231"/>
    </location>
</feature>
<feature type="topological domain" description="Extracellular" evidence="1">
    <location>
        <begin position="232"/>
        <end position="297"/>
    </location>
</feature>
<feature type="region of interest" description="Disordered" evidence="2">
    <location>
        <begin position="1"/>
        <end position="88"/>
    </location>
</feature>
<feature type="compositionally biased region" description="Low complexity" evidence="2">
    <location>
        <begin position="22"/>
        <end position="31"/>
    </location>
</feature>
<feature type="compositionally biased region" description="Acidic residues" evidence="2">
    <location>
        <begin position="61"/>
        <end position="70"/>
    </location>
</feature>
<feature type="compositionally biased region" description="Acidic residues" evidence="2">
    <location>
        <begin position="78"/>
        <end position="88"/>
    </location>
</feature>
<sequence length="297" mass="33424">MEESAPVESQGQLPSPHHGSLRRAVAAVLALDGESTLGRRKKRRKDSRPESIIIYRSDNEKTDEEPEESEGGDRPKEEEGEDFLDYPGDDGVWNMPLDSRYVTLTGTITRGKKKGQMVDIHVTLTEKELQELTKPKELSREAAPEGRRACQVGADQGPHVVLWTLVCLPVVFVLSFVVSFYYGTITWYNIFLVYNEERTFWHKISCCPCLILFYPVLIMTMASSLGLYAAVAQLSWSWAAWWRAACDMEKGFCGWLCSKLGLEDCSPYSIVELLESDNISGNLSNKDPIQEVETSTV</sequence>
<proteinExistence type="evidence at transcript level"/>
<evidence type="ECO:0000255" key="1"/>
<evidence type="ECO:0000256" key="2">
    <source>
        <dbReference type="SAM" id="MobiDB-lite"/>
    </source>
</evidence>
<evidence type="ECO:0000305" key="3"/>
<name>TM169_MOUSE</name>
<protein>
    <recommendedName>
        <fullName>Transmembrane protein 169</fullName>
    </recommendedName>
</protein>
<comment type="subcellular location">
    <subcellularLocation>
        <location evidence="3">Membrane</location>
        <topology evidence="3">Multi-pass membrane protein</topology>
    </subcellularLocation>
</comment>
<gene>
    <name type="primary">Tmem169</name>
</gene>
<keyword id="KW-0472">Membrane</keyword>
<keyword id="KW-1185">Reference proteome</keyword>
<keyword id="KW-0812">Transmembrane</keyword>
<keyword id="KW-1133">Transmembrane helix</keyword>
<organism>
    <name type="scientific">Mus musculus</name>
    <name type="common">Mouse</name>
    <dbReference type="NCBI Taxonomy" id="10090"/>
    <lineage>
        <taxon>Eukaryota</taxon>
        <taxon>Metazoa</taxon>
        <taxon>Chordata</taxon>
        <taxon>Craniata</taxon>
        <taxon>Vertebrata</taxon>
        <taxon>Euteleostomi</taxon>
        <taxon>Mammalia</taxon>
        <taxon>Eutheria</taxon>
        <taxon>Euarchontoglires</taxon>
        <taxon>Glires</taxon>
        <taxon>Rodentia</taxon>
        <taxon>Myomorpha</taxon>
        <taxon>Muroidea</taxon>
        <taxon>Muridae</taxon>
        <taxon>Murinae</taxon>
        <taxon>Mus</taxon>
        <taxon>Mus</taxon>
    </lineage>
</organism>
<reference key="1">
    <citation type="journal article" date="2005" name="Science">
        <title>The transcriptional landscape of the mammalian genome.</title>
        <authorList>
            <person name="Carninci P."/>
            <person name="Kasukawa T."/>
            <person name="Katayama S."/>
            <person name="Gough J."/>
            <person name="Frith M.C."/>
            <person name="Maeda N."/>
            <person name="Oyama R."/>
            <person name="Ravasi T."/>
            <person name="Lenhard B."/>
            <person name="Wells C."/>
            <person name="Kodzius R."/>
            <person name="Shimokawa K."/>
            <person name="Bajic V.B."/>
            <person name="Brenner S.E."/>
            <person name="Batalov S."/>
            <person name="Forrest A.R."/>
            <person name="Zavolan M."/>
            <person name="Davis M.J."/>
            <person name="Wilming L.G."/>
            <person name="Aidinis V."/>
            <person name="Allen J.E."/>
            <person name="Ambesi-Impiombato A."/>
            <person name="Apweiler R."/>
            <person name="Aturaliya R.N."/>
            <person name="Bailey T.L."/>
            <person name="Bansal M."/>
            <person name="Baxter L."/>
            <person name="Beisel K.W."/>
            <person name="Bersano T."/>
            <person name="Bono H."/>
            <person name="Chalk A.M."/>
            <person name="Chiu K.P."/>
            <person name="Choudhary V."/>
            <person name="Christoffels A."/>
            <person name="Clutterbuck D.R."/>
            <person name="Crowe M.L."/>
            <person name="Dalla E."/>
            <person name="Dalrymple B.P."/>
            <person name="de Bono B."/>
            <person name="Della Gatta G."/>
            <person name="di Bernardo D."/>
            <person name="Down T."/>
            <person name="Engstrom P."/>
            <person name="Fagiolini M."/>
            <person name="Faulkner G."/>
            <person name="Fletcher C.F."/>
            <person name="Fukushima T."/>
            <person name="Furuno M."/>
            <person name="Futaki S."/>
            <person name="Gariboldi M."/>
            <person name="Georgii-Hemming P."/>
            <person name="Gingeras T.R."/>
            <person name="Gojobori T."/>
            <person name="Green R.E."/>
            <person name="Gustincich S."/>
            <person name="Harbers M."/>
            <person name="Hayashi Y."/>
            <person name="Hensch T.K."/>
            <person name="Hirokawa N."/>
            <person name="Hill D."/>
            <person name="Huminiecki L."/>
            <person name="Iacono M."/>
            <person name="Ikeo K."/>
            <person name="Iwama A."/>
            <person name="Ishikawa T."/>
            <person name="Jakt M."/>
            <person name="Kanapin A."/>
            <person name="Katoh M."/>
            <person name="Kawasawa Y."/>
            <person name="Kelso J."/>
            <person name="Kitamura H."/>
            <person name="Kitano H."/>
            <person name="Kollias G."/>
            <person name="Krishnan S.P."/>
            <person name="Kruger A."/>
            <person name="Kummerfeld S.K."/>
            <person name="Kurochkin I.V."/>
            <person name="Lareau L.F."/>
            <person name="Lazarevic D."/>
            <person name="Lipovich L."/>
            <person name="Liu J."/>
            <person name="Liuni S."/>
            <person name="McWilliam S."/>
            <person name="Madan Babu M."/>
            <person name="Madera M."/>
            <person name="Marchionni L."/>
            <person name="Matsuda H."/>
            <person name="Matsuzawa S."/>
            <person name="Miki H."/>
            <person name="Mignone F."/>
            <person name="Miyake S."/>
            <person name="Morris K."/>
            <person name="Mottagui-Tabar S."/>
            <person name="Mulder N."/>
            <person name="Nakano N."/>
            <person name="Nakauchi H."/>
            <person name="Ng P."/>
            <person name="Nilsson R."/>
            <person name="Nishiguchi S."/>
            <person name="Nishikawa S."/>
            <person name="Nori F."/>
            <person name="Ohara O."/>
            <person name="Okazaki Y."/>
            <person name="Orlando V."/>
            <person name="Pang K.C."/>
            <person name="Pavan W.J."/>
            <person name="Pavesi G."/>
            <person name="Pesole G."/>
            <person name="Petrovsky N."/>
            <person name="Piazza S."/>
            <person name="Reed J."/>
            <person name="Reid J.F."/>
            <person name="Ring B.Z."/>
            <person name="Ringwald M."/>
            <person name="Rost B."/>
            <person name="Ruan Y."/>
            <person name="Salzberg S.L."/>
            <person name="Sandelin A."/>
            <person name="Schneider C."/>
            <person name="Schoenbach C."/>
            <person name="Sekiguchi K."/>
            <person name="Semple C.A."/>
            <person name="Seno S."/>
            <person name="Sessa L."/>
            <person name="Sheng Y."/>
            <person name="Shibata Y."/>
            <person name="Shimada H."/>
            <person name="Shimada K."/>
            <person name="Silva D."/>
            <person name="Sinclair B."/>
            <person name="Sperling S."/>
            <person name="Stupka E."/>
            <person name="Sugiura K."/>
            <person name="Sultana R."/>
            <person name="Takenaka Y."/>
            <person name="Taki K."/>
            <person name="Tammoja K."/>
            <person name="Tan S.L."/>
            <person name="Tang S."/>
            <person name="Taylor M.S."/>
            <person name="Tegner J."/>
            <person name="Teichmann S.A."/>
            <person name="Ueda H.R."/>
            <person name="van Nimwegen E."/>
            <person name="Verardo R."/>
            <person name="Wei C.L."/>
            <person name="Yagi K."/>
            <person name="Yamanishi H."/>
            <person name="Zabarovsky E."/>
            <person name="Zhu S."/>
            <person name="Zimmer A."/>
            <person name="Hide W."/>
            <person name="Bult C."/>
            <person name="Grimmond S.M."/>
            <person name="Teasdale R.D."/>
            <person name="Liu E.T."/>
            <person name="Brusic V."/>
            <person name="Quackenbush J."/>
            <person name="Wahlestedt C."/>
            <person name="Mattick J.S."/>
            <person name="Hume D.A."/>
            <person name="Kai C."/>
            <person name="Sasaki D."/>
            <person name="Tomaru Y."/>
            <person name="Fukuda S."/>
            <person name="Kanamori-Katayama M."/>
            <person name="Suzuki M."/>
            <person name="Aoki J."/>
            <person name="Arakawa T."/>
            <person name="Iida J."/>
            <person name="Imamura K."/>
            <person name="Itoh M."/>
            <person name="Kato T."/>
            <person name="Kawaji H."/>
            <person name="Kawagashira N."/>
            <person name="Kawashima T."/>
            <person name="Kojima M."/>
            <person name="Kondo S."/>
            <person name="Konno H."/>
            <person name="Nakano K."/>
            <person name="Ninomiya N."/>
            <person name="Nishio T."/>
            <person name="Okada M."/>
            <person name="Plessy C."/>
            <person name="Shibata K."/>
            <person name="Shiraki T."/>
            <person name="Suzuki S."/>
            <person name="Tagami M."/>
            <person name="Waki K."/>
            <person name="Watahiki A."/>
            <person name="Okamura-Oho Y."/>
            <person name="Suzuki H."/>
            <person name="Kawai J."/>
            <person name="Hayashizaki Y."/>
        </authorList>
    </citation>
    <scope>NUCLEOTIDE SEQUENCE [LARGE SCALE MRNA]</scope>
    <source>
        <strain>C57BL/6J</strain>
        <tissue>Brain cortex</tissue>
        <tissue>Embryo</tissue>
    </source>
</reference>
<reference key="2">
    <citation type="journal article" date="2004" name="Genome Res.">
        <title>The status, quality, and expansion of the NIH full-length cDNA project: the Mammalian Gene Collection (MGC).</title>
        <authorList>
            <consortium name="The MGC Project Team"/>
        </authorList>
    </citation>
    <scope>NUCLEOTIDE SEQUENCE [LARGE SCALE MRNA]</scope>
    <source>
        <tissue>Brain</tissue>
    </source>
</reference>
<dbReference type="EMBL" id="AK034935">
    <property type="protein sequence ID" value="BAC28886.1"/>
    <property type="molecule type" value="mRNA"/>
</dbReference>
<dbReference type="EMBL" id="AK043681">
    <property type="protein sequence ID" value="BAC31618.1"/>
    <property type="molecule type" value="mRNA"/>
</dbReference>
<dbReference type="EMBL" id="BC116730">
    <property type="protein sequence ID" value="AAI16731.1"/>
    <property type="molecule type" value="mRNA"/>
</dbReference>
<dbReference type="EMBL" id="BC117087">
    <property type="protein sequence ID" value="AAI17088.1"/>
    <property type="molecule type" value="mRNA"/>
</dbReference>
<dbReference type="CCDS" id="CCDS15033.1"/>
<dbReference type="RefSeq" id="NP_001405211.1">
    <property type="nucleotide sequence ID" value="NM_001418282.1"/>
</dbReference>
<dbReference type="RefSeq" id="NP_001405212.1">
    <property type="nucleotide sequence ID" value="NM_001418283.1"/>
</dbReference>
<dbReference type="RefSeq" id="NP_001405213.1">
    <property type="nucleotide sequence ID" value="NM_001418284.1"/>
</dbReference>
<dbReference type="RefSeq" id="NP_780773.1">
    <property type="nucleotide sequence ID" value="NM_175564.5"/>
</dbReference>
<dbReference type="RefSeq" id="XP_006496114.1">
    <property type="nucleotide sequence ID" value="XM_006496051.1"/>
</dbReference>
<dbReference type="RefSeq" id="XP_006496115.1">
    <property type="nucleotide sequence ID" value="XM_006496052.2"/>
</dbReference>
<dbReference type="RefSeq" id="XP_006496116.1">
    <property type="nucleotide sequence ID" value="XM_006496053.2"/>
</dbReference>
<dbReference type="FunCoup" id="Q8BG50">
    <property type="interactions" value="20"/>
</dbReference>
<dbReference type="STRING" id="10090.ENSMUSP00000027380"/>
<dbReference type="iPTMnet" id="Q8BG50"/>
<dbReference type="PhosphoSitePlus" id="Q8BG50"/>
<dbReference type="PaxDb" id="10090-ENSMUSP00000027380"/>
<dbReference type="ProteomicsDB" id="260682"/>
<dbReference type="Antibodypedia" id="68249">
    <property type="antibodies" value="47 antibodies from 9 providers"/>
</dbReference>
<dbReference type="DNASU" id="271711"/>
<dbReference type="Ensembl" id="ENSMUST00000027380.12">
    <property type="protein sequence ID" value="ENSMUSP00000027380.6"/>
    <property type="gene ID" value="ENSMUSG00000026188.12"/>
</dbReference>
<dbReference type="GeneID" id="271711"/>
<dbReference type="KEGG" id="mmu:271711"/>
<dbReference type="UCSC" id="uc007bkk.1">
    <property type="organism name" value="mouse"/>
</dbReference>
<dbReference type="AGR" id="MGI:2442781"/>
<dbReference type="CTD" id="92691"/>
<dbReference type="MGI" id="MGI:2442781">
    <property type="gene designation" value="Tmem169"/>
</dbReference>
<dbReference type="VEuPathDB" id="HostDB:ENSMUSG00000026188"/>
<dbReference type="eggNOG" id="ENOG502QUD9">
    <property type="taxonomic scope" value="Eukaryota"/>
</dbReference>
<dbReference type="GeneTree" id="ENSGT00390000015276"/>
<dbReference type="HOGENOM" id="CLU_082140_0_0_1"/>
<dbReference type="InParanoid" id="Q8BG50"/>
<dbReference type="OMA" id="AFSEWWQ"/>
<dbReference type="OrthoDB" id="10066407at2759"/>
<dbReference type="PhylomeDB" id="Q8BG50"/>
<dbReference type="TreeFam" id="TF323682"/>
<dbReference type="BioGRID-ORCS" id="271711">
    <property type="hits" value="3 hits in 80 CRISPR screens"/>
</dbReference>
<dbReference type="PRO" id="PR:Q8BG50"/>
<dbReference type="Proteomes" id="UP000000589">
    <property type="component" value="Chromosome 1"/>
</dbReference>
<dbReference type="RNAct" id="Q8BG50">
    <property type="molecule type" value="protein"/>
</dbReference>
<dbReference type="Bgee" id="ENSMUSG00000026188">
    <property type="expression patterns" value="Expressed in secondary oocyte and 119 other cell types or tissues"/>
</dbReference>
<dbReference type="ExpressionAtlas" id="Q8BG50">
    <property type="expression patterns" value="baseline and differential"/>
</dbReference>
<dbReference type="GO" id="GO:0016020">
    <property type="term" value="C:membrane"/>
    <property type="evidence" value="ECO:0007669"/>
    <property type="project" value="UniProtKB-SubCell"/>
</dbReference>
<dbReference type="InterPro" id="IPR029386">
    <property type="entry name" value="TMEM169"/>
</dbReference>
<dbReference type="PANTHER" id="PTHR31777">
    <property type="entry name" value="TRANSMEMBRANE PROTEIN 169"/>
    <property type="match status" value="1"/>
</dbReference>
<dbReference type="PANTHER" id="PTHR31777:SF0">
    <property type="entry name" value="TRANSMEMBRANE PROTEIN 169"/>
    <property type="match status" value="1"/>
</dbReference>
<dbReference type="Pfam" id="PF15052">
    <property type="entry name" value="TMEM169"/>
    <property type="match status" value="1"/>
</dbReference>
<accession>Q8BG50</accession>